<accession>Q0W0H2</accession>
<dbReference type="EC" id="6.1.1.10" evidence="1"/>
<dbReference type="EMBL" id="AM114193">
    <property type="protein sequence ID" value="CAJ38121.1"/>
    <property type="molecule type" value="Genomic_DNA"/>
</dbReference>
<dbReference type="SMR" id="Q0W0H2"/>
<dbReference type="STRING" id="351160.RRC417"/>
<dbReference type="KEGG" id="rci:RRC417"/>
<dbReference type="PATRIC" id="fig|351160.9.peg.151"/>
<dbReference type="eggNOG" id="arCOG00810">
    <property type="taxonomic scope" value="Archaea"/>
</dbReference>
<dbReference type="OrthoDB" id="371856at2157"/>
<dbReference type="Proteomes" id="UP000000663">
    <property type="component" value="Chromosome"/>
</dbReference>
<dbReference type="GO" id="GO:0017101">
    <property type="term" value="C:aminoacyl-tRNA synthetase multienzyme complex"/>
    <property type="evidence" value="ECO:0007669"/>
    <property type="project" value="TreeGrafter"/>
</dbReference>
<dbReference type="GO" id="GO:0005829">
    <property type="term" value="C:cytosol"/>
    <property type="evidence" value="ECO:0007669"/>
    <property type="project" value="TreeGrafter"/>
</dbReference>
<dbReference type="GO" id="GO:0005524">
    <property type="term" value="F:ATP binding"/>
    <property type="evidence" value="ECO:0007669"/>
    <property type="project" value="UniProtKB-UniRule"/>
</dbReference>
<dbReference type="GO" id="GO:0046872">
    <property type="term" value="F:metal ion binding"/>
    <property type="evidence" value="ECO:0007669"/>
    <property type="project" value="UniProtKB-KW"/>
</dbReference>
<dbReference type="GO" id="GO:0004825">
    <property type="term" value="F:methionine-tRNA ligase activity"/>
    <property type="evidence" value="ECO:0007669"/>
    <property type="project" value="UniProtKB-UniRule"/>
</dbReference>
<dbReference type="GO" id="GO:0000049">
    <property type="term" value="F:tRNA binding"/>
    <property type="evidence" value="ECO:0007669"/>
    <property type="project" value="UniProtKB-KW"/>
</dbReference>
<dbReference type="GO" id="GO:0006431">
    <property type="term" value="P:methionyl-tRNA aminoacylation"/>
    <property type="evidence" value="ECO:0007669"/>
    <property type="project" value="UniProtKB-UniRule"/>
</dbReference>
<dbReference type="CDD" id="cd07957">
    <property type="entry name" value="Anticodon_Ia_Met"/>
    <property type="match status" value="1"/>
</dbReference>
<dbReference type="CDD" id="cd00814">
    <property type="entry name" value="MetRS_core"/>
    <property type="match status" value="1"/>
</dbReference>
<dbReference type="CDD" id="cd02800">
    <property type="entry name" value="tRNA_bind_EcMetRS_like"/>
    <property type="match status" value="1"/>
</dbReference>
<dbReference type="FunFam" id="2.40.50.140:FF:000042">
    <property type="entry name" value="Methionine--tRNA ligase"/>
    <property type="match status" value="1"/>
</dbReference>
<dbReference type="Gene3D" id="3.40.50.620">
    <property type="entry name" value="HUPs"/>
    <property type="match status" value="1"/>
</dbReference>
<dbReference type="Gene3D" id="1.10.730.10">
    <property type="entry name" value="Isoleucyl-tRNA Synthetase, Domain 1"/>
    <property type="match status" value="1"/>
</dbReference>
<dbReference type="Gene3D" id="2.20.28.20">
    <property type="entry name" value="Methionyl-tRNA synthetase, Zn-domain"/>
    <property type="match status" value="1"/>
</dbReference>
<dbReference type="Gene3D" id="2.40.50.140">
    <property type="entry name" value="Nucleic acid-binding proteins"/>
    <property type="match status" value="1"/>
</dbReference>
<dbReference type="HAMAP" id="MF_00098">
    <property type="entry name" value="Met_tRNA_synth_type1"/>
    <property type="match status" value="1"/>
</dbReference>
<dbReference type="InterPro" id="IPR041872">
    <property type="entry name" value="Anticodon_Met"/>
</dbReference>
<dbReference type="InterPro" id="IPR004495">
    <property type="entry name" value="Met-tRNA-synth_bsu_C"/>
</dbReference>
<dbReference type="InterPro" id="IPR023458">
    <property type="entry name" value="Met-tRNA_ligase_1"/>
</dbReference>
<dbReference type="InterPro" id="IPR014758">
    <property type="entry name" value="Met-tRNA_synth"/>
</dbReference>
<dbReference type="InterPro" id="IPR015413">
    <property type="entry name" value="Methionyl/Leucyl_tRNA_Synth"/>
</dbReference>
<dbReference type="InterPro" id="IPR033911">
    <property type="entry name" value="MetRS_core"/>
</dbReference>
<dbReference type="InterPro" id="IPR029038">
    <property type="entry name" value="MetRS_Zn"/>
</dbReference>
<dbReference type="InterPro" id="IPR012340">
    <property type="entry name" value="NA-bd_OB-fold"/>
</dbReference>
<dbReference type="InterPro" id="IPR014729">
    <property type="entry name" value="Rossmann-like_a/b/a_fold"/>
</dbReference>
<dbReference type="InterPro" id="IPR002547">
    <property type="entry name" value="tRNA-bd_dom"/>
</dbReference>
<dbReference type="InterPro" id="IPR009080">
    <property type="entry name" value="tRNAsynth_Ia_anticodon-bd"/>
</dbReference>
<dbReference type="NCBIfam" id="TIGR00398">
    <property type="entry name" value="metG"/>
    <property type="match status" value="1"/>
</dbReference>
<dbReference type="NCBIfam" id="TIGR00399">
    <property type="entry name" value="metG_C_term"/>
    <property type="match status" value="1"/>
</dbReference>
<dbReference type="NCBIfam" id="NF001100">
    <property type="entry name" value="PRK00133.1"/>
    <property type="match status" value="1"/>
</dbReference>
<dbReference type="PANTHER" id="PTHR45765">
    <property type="entry name" value="METHIONINE--TRNA LIGASE"/>
    <property type="match status" value="1"/>
</dbReference>
<dbReference type="PANTHER" id="PTHR45765:SF1">
    <property type="entry name" value="METHIONINE--TRNA LIGASE, CYTOPLASMIC"/>
    <property type="match status" value="1"/>
</dbReference>
<dbReference type="Pfam" id="PF19303">
    <property type="entry name" value="Anticodon_3"/>
    <property type="match status" value="1"/>
</dbReference>
<dbReference type="Pfam" id="PF09334">
    <property type="entry name" value="tRNA-synt_1g"/>
    <property type="match status" value="1"/>
</dbReference>
<dbReference type="Pfam" id="PF01588">
    <property type="entry name" value="tRNA_bind"/>
    <property type="match status" value="1"/>
</dbReference>
<dbReference type="PRINTS" id="PR01041">
    <property type="entry name" value="TRNASYNTHMET"/>
</dbReference>
<dbReference type="SUPFAM" id="SSF47323">
    <property type="entry name" value="Anticodon-binding domain of a subclass of class I aminoacyl-tRNA synthetases"/>
    <property type="match status" value="1"/>
</dbReference>
<dbReference type="SUPFAM" id="SSF57770">
    <property type="entry name" value="Methionyl-tRNA synthetase (MetRS), Zn-domain"/>
    <property type="match status" value="1"/>
</dbReference>
<dbReference type="SUPFAM" id="SSF50249">
    <property type="entry name" value="Nucleic acid-binding proteins"/>
    <property type="match status" value="1"/>
</dbReference>
<dbReference type="SUPFAM" id="SSF52374">
    <property type="entry name" value="Nucleotidylyl transferase"/>
    <property type="match status" value="1"/>
</dbReference>
<dbReference type="PROSITE" id="PS50886">
    <property type="entry name" value="TRBD"/>
    <property type="match status" value="1"/>
</dbReference>
<proteinExistence type="inferred from homology"/>
<organism>
    <name type="scientific">Methanocella arvoryzae (strain DSM 22066 / NBRC 105507 / MRE50)</name>
    <dbReference type="NCBI Taxonomy" id="351160"/>
    <lineage>
        <taxon>Archaea</taxon>
        <taxon>Methanobacteriati</taxon>
        <taxon>Methanobacteriota</taxon>
        <taxon>Stenosarchaea group</taxon>
        <taxon>Methanomicrobia</taxon>
        <taxon>Methanocellales</taxon>
        <taxon>Methanocellaceae</taxon>
        <taxon>Methanocella</taxon>
    </lineage>
</organism>
<keyword id="KW-0030">Aminoacyl-tRNA synthetase</keyword>
<keyword id="KW-0067">ATP-binding</keyword>
<keyword id="KW-0963">Cytoplasm</keyword>
<keyword id="KW-0436">Ligase</keyword>
<keyword id="KW-0479">Metal-binding</keyword>
<keyword id="KW-0547">Nucleotide-binding</keyword>
<keyword id="KW-0648">Protein biosynthesis</keyword>
<keyword id="KW-1185">Reference proteome</keyword>
<keyword id="KW-0694">RNA-binding</keyword>
<keyword id="KW-0820">tRNA-binding</keyword>
<keyword id="KW-0862">Zinc</keyword>
<protein>
    <recommendedName>
        <fullName evidence="1">Methionine--tRNA ligase</fullName>
        <ecNumber evidence="1">6.1.1.10</ecNumber>
    </recommendedName>
    <alternativeName>
        <fullName evidence="1">Methionyl-tRNA synthetase</fullName>
        <shortName evidence="1">MetRS</shortName>
    </alternativeName>
</protein>
<sequence>MIEEKLMSEFPCDKPVLVTCGLPYANGSAHIGHLRTYIPADMFVRTLRMMGQETVFVCGSDAHGTPIIVNAEEQKISPRQLVDKYHVQFDSIFKKCGVIFDRYGNTDDPTNHARTKSIVSELQKNGYVYPKEIKVAYCPQCQRGLPDRYVEGVCPYCSSIARGDECDIGCQRHLEPGEILDPKCKVCGSKAEVRTQEHFFFKLSEFGDFLQEYLNTLHATPNAVNYAMEWAKELKDWCITRNLEWGVKYPGHEDLVVYVWVDAPIGYIAFTEEYAKAAGKNWEDLWKGDSRIIHFIGGDIIYHHCIFWPAMLKGAGYTLPWGVVASGMIKVNDKKFSKSRGYIVWVEDDYLAHGFHPDLLRYYILSYTSHTKDINFSWTEFQTKINKELVGSYGNFVNRVLTFIDSKGIDVKGTIDPKISSAIKTAIDMVKTEIGNYEFKKICDSIITLSDVGNTYFQSHEPWKLIKENPAACENVLFNCIQIVKALAILSEPTVPEKAKEIWGMLGYDPATLASARIDDALVPYENRPRPKPSILFTKLEDKKIAEMTKIMDERVKAAEAKLNGKKAEEELEPQLPPITIDDFAKMELRVGKVIASEKIKGSKKLLKNLIDLGEDKPRQIVSGIAEVYTPEEMVGKTVIVIANLKPTKIMGVESNGMILAADSNGATLLTVEKPSEPGTKVR</sequence>
<comment type="function">
    <text evidence="1">Is required not only for elongation of protein synthesis but also for the initiation of all mRNA translation through initiator tRNA(fMet) aminoacylation.</text>
</comment>
<comment type="catalytic activity">
    <reaction evidence="1">
        <text>tRNA(Met) + L-methionine + ATP = L-methionyl-tRNA(Met) + AMP + diphosphate</text>
        <dbReference type="Rhea" id="RHEA:13481"/>
        <dbReference type="Rhea" id="RHEA-COMP:9667"/>
        <dbReference type="Rhea" id="RHEA-COMP:9698"/>
        <dbReference type="ChEBI" id="CHEBI:30616"/>
        <dbReference type="ChEBI" id="CHEBI:33019"/>
        <dbReference type="ChEBI" id="CHEBI:57844"/>
        <dbReference type="ChEBI" id="CHEBI:78442"/>
        <dbReference type="ChEBI" id="CHEBI:78530"/>
        <dbReference type="ChEBI" id="CHEBI:456215"/>
        <dbReference type="EC" id="6.1.1.10"/>
    </reaction>
</comment>
<comment type="cofactor">
    <cofactor evidence="1">
        <name>Zn(2+)</name>
        <dbReference type="ChEBI" id="CHEBI:29105"/>
    </cofactor>
    <text evidence="1">Binds 1 zinc ion per subunit.</text>
</comment>
<comment type="subunit">
    <text evidence="1">Homodimer.</text>
</comment>
<comment type="subcellular location">
    <subcellularLocation>
        <location evidence="1">Cytoplasm</location>
    </subcellularLocation>
</comment>
<comment type="similarity">
    <text evidence="1">Belongs to the class-I aminoacyl-tRNA synthetase family. MetG type 1 subfamily.</text>
</comment>
<evidence type="ECO:0000255" key="1">
    <source>
        <dbReference type="HAMAP-Rule" id="MF_00098"/>
    </source>
</evidence>
<reference key="1">
    <citation type="journal article" date="2006" name="Science">
        <title>Genome of rice cluster I archaea -- the key methane producers in the rice rhizosphere.</title>
        <authorList>
            <person name="Erkel C."/>
            <person name="Kube M."/>
            <person name="Reinhardt R."/>
            <person name="Liesack W."/>
        </authorList>
    </citation>
    <scope>NUCLEOTIDE SEQUENCE [LARGE SCALE GENOMIC DNA]</scope>
    <source>
        <strain>DSM 22066 / NBRC 105507 / MRE50</strain>
    </source>
</reference>
<gene>
    <name evidence="1" type="primary">metG</name>
    <name type="ordered locus">UNCMA_01450</name>
    <name type="ORF">RRC417</name>
</gene>
<feature type="chain" id="PRO_0000331957" description="Methionine--tRNA ligase">
    <location>
        <begin position="1"/>
        <end position="683"/>
    </location>
</feature>
<feature type="domain" description="tRNA-binding" evidence="1">
    <location>
        <begin position="583"/>
        <end position="683"/>
    </location>
</feature>
<feature type="short sequence motif" description="'HIGH' region">
    <location>
        <begin position="23"/>
        <end position="33"/>
    </location>
</feature>
<feature type="short sequence motif" description="'KMSKS' region">
    <location>
        <begin position="335"/>
        <end position="339"/>
    </location>
</feature>
<feature type="binding site" evidence="1">
    <location>
        <position position="154"/>
    </location>
    <ligand>
        <name>Zn(2+)</name>
        <dbReference type="ChEBI" id="CHEBI:29105"/>
    </ligand>
</feature>
<feature type="binding site" evidence="1">
    <location>
        <position position="157"/>
    </location>
    <ligand>
        <name>Zn(2+)</name>
        <dbReference type="ChEBI" id="CHEBI:29105"/>
    </ligand>
</feature>
<feature type="binding site" evidence="1">
    <location>
        <position position="166"/>
    </location>
    <ligand>
        <name>Zn(2+)</name>
        <dbReference type="ChEBI" id="CHEBI:29105"/>
    </ligand>
</feature>
<feature type="binding site" evidence="1">
    <location>
        <position position="170"/>
    </location>
    <ligand>
        <name>Zn(2+)</name>
        <dbReference type="ChEBI" id="CHEBI:29105"/>
    </ligand>
</feature>
<feature type="binding site" evidence="1">
    <location>
        <position position="338"/>
    </location>
    <ligand>
        <name>ATP</name>
        <dbReference type="ChEBI" id="CHEBI:30616"/>
    </ligand>
</feature>
<name>SYM_METAR</name>